<keyword id="KW-0249">Electron transport</keyword>
<keyword id="KW-0349">Heme</keyword>
<keyword id="KW-0408">Iron</keyword>
<keyword id="KW-0472">Membrane</keyword>
<keyword id="KW-0479">Metal-binding</keyword>
<keyword id="KW-0602">Photosynthesis</keyword>
<keyword id="KW-0604">Photosystem II</keyword>
<keyword id="KW-0793">Thylakoid</keyword>
<keyword id="KW-0812">Transmembrane</keyword>
<keyword id="KW-1133">Transmembrane helix</keyword>
<keyword id="KW-0813">Transport</keyword>
<feature type="chain" id="PRO_1000056938" description="Cytochrome b559 subunit beta">
    <location>
        <begin position="1"/>
        <end position="48"/>
    </location>
</feature>
<feature type="transmembrane region" description="Helical" evidence="1">
    <location>
        <begin position="23"/>
        <end position="39"/>
    </location>
</feature>
<feature type="binding site" description="axial binding residue" evidence="1">
    <location>
        <position position="27"/>
    </location>
    <ligand>
        <name>heme</name>
        <dbReference type="ChEBI" id="CHEBI:30413"/>
        <note>ligand shared with alpha subunit</note>
    </ligand>
    <ligandPart>
        <name>Fe</name>
        <dbReference type="ChEBI" id="CHEBI:18248"/>
    </ligandPart>
</feature>
<proteinExistence type="inferred from homology"/>
<evidence type="ECO:0000255" key="1">
    <source>
        <dbReference type="HAMAP-Rule" id="MF_00643"/>
    </source>
</evidence>
<evidence type="ECO:0000305" key="2"/>
<comment type="function">
    <text evidence="1">This b-type cytochrome is tightly associated with the reaction center of photosystem II (PSII). PSII is a light-driven water:plastoquinone oxidoreductase that uses light energy to abstract electrons from H(2)O, generating O(2) and a proton gradient subsequently used for ATP formation. It consists of a core antenna complex that captures photons, and an electron transfer chain that converts photonic excitation into a charge separation.</text>
</comment>
<comment type="cofactor">
    <cofactor evidence="1">
        <name>heme b</name>
        <dbReference type="ChEBI" id="CHEBI:60344"/>
    </cofactor>
    <text evidence="1">With its partner (PsbE) binds heme. PSII binds additional chlorophylls, carotenoids and specific lipids.</text>
</comment>
<comment type="subunit">
    <text evidence="2">Heterodimer of an alpha subunit and a beta subunit. PSII is composed of 1 copy each of membrane proteins PsbA, PsbB, PsbC, PsbD, PsbE, PsbF, PsbH, PsbI, PsbJ, PsbK, PsbL, PsbM, PsbT, PsbX, PsbY, Psb30/Ycf12, peripheral proteins PsbO, CyanoQ (PsbQ), PsbU, PsbV and a large number of cofactors. It forms dimeric complexes.</text>
</comment>
<comment type="subcellular location">
    <subcellularLocation>
        <location evidence="1">Cellular thylakoid membrane</location>
        <topology evidence="1">Single-pass membrane protein</topology>
    </subcellularLocation>
</comment>
<comment type="similarity">
    <text evidence="1">Belongs to the PsbE/PsbF family.</text>
</comment>
<reference key="1">
    <citation type="journal article" date="2007" name="PLoS Genet.">
        <title>Patterns and implications of gene gain and loss in the evolution of Prochlorococcus.</title>
        <authorList>
            <person name="Kettler G.C."/>
            <person name="Martiny A.C."/>
            <person name="Huang K."/>
            <person name="Zucker J."/>
            <person name="Coleman M.L."/>
            <person name="Rodrigue S."/>
            <person name="Chen F."/>
            <person name="Lapidus A."/>
            <person name="Ferriera S."/>
            <person name="Johnson J."/>
            <person name="Steglich C."/>
            <person name="Church G.M."/>
            <person name="Richardson P."/>
            <person name="Chisholm S.W."/>
        </authorList>
    </citation>
    <scope>NUCLEOTIDE SEQUENCE [LARGE SCALE GENOMIC DNA]</scope>
    <source>
        <strain>MIT 9515</strain>
    </source>
</reference>
<gene>
    <name evidence="1" type="primary">psbF</name>
    <name type="ordered locus">P9515_03311</name>
</gene>
<dbReference type="EMBL" id="CP000552">
    <property type="protein sequence ID" value="ABM71540.1"/>
    <property type="molecule type" value="Genomic_DNA"/>
</dbReference>
<dbReference type="RefSeq" id="WP_011819649.1">
    <property type="nucleotide sequence ID" value="NC_008817.1"/>
</dbReference>
<dbReference type="SMR" id="A2BUS9"/>
<dbReference type="STRING" id="167542.P9515_03311"/>
<dbReference type="GeneID" id="60201382"/>
<dbReference type="KEGG" id="pmc:P9515_03311"/>
<dbReference type="HOGENOM" id="CLU_211753_1_0_3"/>
<dbReference type="OrthoDB" id="532613at2"/>
<dbReference type="Proteomes" id="UP000001589">
    <property type="component" value="Chromosome"/>
</dbReference>
<dbReference type="GO" id="GO:0009539">
    <property type="term" value="C:photosystem II reaction center"/>
    <property type="evidence" value="ECO:0007669"/>
    <property type="project" value="InterPro"/>
</dbReference>
<dbReference type="GO" id="GO:0031676">
    <property type="term" value="C:plasma membrane-derived thylakoid membrane"/>
    <property type="evidence" value="ECO:0007669"/>
    <property type="project" value="UniProtKB-SubCell"/>
</dbReference>
<dbReference type="GO" id="GO:0009055">
    <property type="term" value="F:electron transfer activity"/>
    <property type="evidence" value="ECO:0007669"/>
    <property type="project" value="UniProtKB-UniRule"/>
</dbReference>
<dbReference type="GO" id="GO:0020037">
    <property type="term" value="F:heme binding"/>
    <property type="evidence" value="ECO:0007669"/>
    <property type="project" value="InterPro"/>
</dbReference>
<dbReference type="GO" id="GO:0005506">
    <property type="term" value="F:iron ion binding"/>
    <property type="evidence" value="ECO:0007669"/>
    <property type="project" value="UniProtKB-UniRule"/>
</dbReference>
<dbReference type="GO" id="GO:0009767">
    <property type="term" value="P:photosynthetic electron transport chain"/>
    <property type="evidence" value="ECO:0007669"/>
    <property type="project" value="InterPro"/>
</dbReference>
<dbReference type="HAMAP" id="MF_00643">
    <property type="entry name" value="PSII_PsbF"/>
    <property type="match status" value="1"/>
</dbReference>
<dbReference type="InterPro" id="IPR006241">
    <property type="entry name" value="PSII_cyt_b559_bsu"/>
</dbReference>
<dbReference type="InterPro" id="IPR006216">
    <property type="entry name" value="PSII_cyt_b559_CS"/>
</dbReference>
<dbReference type="InterPro" id="IPR013081">
    <property type="entry name" value="PSII_cyt_b559_N"/>
</dbReference>
<dbReference type="NCBIfam" id="TIGR01333">
    <property type="entry name" value="cyt_b559_beta"/>
    <property type="match status" value="1"/>
</dbReference>
<dbReference type="Pfam" id="PF00283">
    <property type="entry name" value="Cytochrom_B559"/>
    <property type="match status" value="1"/>
</dbReference>
<dbReference type="PIRSF" id="PIRSF000037">
    <property type="entry name" value="PsbF"/>
    <property type="match status" value="1"/>
</dbReference>
<dbReference type="SUPFAM" id="SSF161045">
    <property type="entry name" value="Cytochrome b559 subunits"/>
    <property type="match status" value="1"/>
</dbReference>
<dbReference type="PROSITE" id="PS00537">
    <property type="entry name" value="CYTOCHROME_B559"/>
    <property type="match status" value="1"/>
</dbReference>
<accession>A2BUS9</accession>
<protein>
    <recommendedName>
        <fullName evidence="1">Cytochrome b559 subunit beta</fullName>
    </recommendedName>
    <alternativeName>
        <fullName evidence="1">PSII reaction center subunit VI</fullName>
    </alternativeName>
</protein>
<sequence>MSNSQAPMQAVEVRVYPIFTVRWLAVHALAIPSVFFLGAIAAMQFISR</sequence>
<name>PSBF_PROM5</name>
<organism>
    <name type="scientific">Prochlorococcus marinus (strain MIT 9515)</name>
    <dbReference type="NCBI Taxonomy" id="167542"/>
    <lineage>
        <taxon>Bacteria</taxon>
        <taxon>Bacillati</taxon>
        <taxon>Cyanobacteriota</taxon>
        <taxon>Cyanophyceae</taxon>
        <taxon>Synechococcales</taxon>
        <taxon>Prochlorococcaceae</taxon>
        <taxon>Prochlorococcus</taxon>
    </lineage>
</organism>